<evidence type="ECO:0000250" key="1"/>
<evidence type="ECO:0000250" key="2">
    <source>
        <dbReference type="UniProtKB" id="Q5XIE5"/>
    </source>
</evidence>
<evidence type="ECO:0000255" key="3"/>
<evidence type="ECO:0000255" key="4">
    <source>
        <dbReference type="PROSITE-ProRule" id="PRU00623"/>
    </source>
</evidence>
<evidence type="ECO:0000305" key="5"/>
<gene>
    <name type="primary">marchf3</name>
    <name type="synonym">march3</name>
</gene>
<comment type="function">
    <text evidence="2">E3 ubiquitin-protein ligase which may be involved in endosomal trafficking. E3 ubiquitin ligases accept ubiquitin from an E2 ubiquitin-conjugating enzyme in the form of a thioester and then directly transfer the ubiquitin to targeted substrates.</text>
</comment>
<comment type="catalytic activity">
    <reaction>
        <text>S-ubiquitinyl-[E2 ubiquitin-conjugating enzyme]-L-cysteine + [acceptor protein]-L-lysine = [E2 ubiquitin-conjugating enzyme]-L-cysteine + N(6)-ubiquitinyl-[acceptor protein]-L-lysine.</text>
        <dbReference type="EC" id="2.3.2.27"/>
    </reaction>
</comment>
<comment type="pathway">
    <text>Protein modification; protein ubiquitination.</text>
</comment>
<comment type="subcellular location">
    <subcellularLocation>
        <location>Cytoplasmic vesicle membrane</location>
        <topology>Multi-pass membrane protein</topology>
    </subcellularLocation>
    <subcellularLocation>
        <location evidence="1">Early endosome membrane</location>
        <topology evidence="1">Multi-pass membrane protein</topology>
    </subcellularLocation>
</comment>
<comment type="domain">
    <text evidence="4">The RING-CH-type zinc finger domain is required for E3 ligase activity.</text>
</comment>
<feature type="chain" id="PRO_0000274508" description="E3 ubiquitin-protein ligase MARCHF3">
    <location>
        <begin position="1"/>
        <end position="252"/>
    </location>
</feature>
<feature type="transmembrane region" description="Helical" evidence="3">
    <location>
        <begin position="144"/>
        <end position="164"/>
    </location>
</feature>
<feature type="transmembrane region" description="Helical" evidence="3">
    <location>
        <begin position="181"/>
        <end position="201"/>
    </location>
</feature>
<feature type="zinc finger region" description="RING-CH-type" evidence="4">
    <location>
        <begin position="62"/>
        <end position="122"/>
    </location>
</feature>
<feature type="binding site" evidence="4">
    <location>
        <position position="70"/>
    </location>
    <ligand>
        <name>Zn(2+)</name>
        <dbReference type="ChEBI" id="CHEBI:29105"/>
        <label>1</label>
    </ligand>
</feature>
<feature type="binding site" evidence="4">
    <location>
        <position position="73"/>
    </location>
    <ligand>
        <name>Zn(2+)</name>
        <dbReference type="ChEBI" id="CHEBI:29105"/>
        <label>1</label>
    </ligand>
</feature>
<feature type="binding site" evidence="4">
    <location>
        <position position="86"/>
    </location>
    <ligand>
        <name>Zn(2+)</name>
        <dbReference type="ChEBI" id="CHEBI:29105"/>
        <label>2</label>
    </ligand>
</feature>
<feature type="binding site" evidence="4">
    <location>
        <position position="88"/>
    </location>
    <ligand>
        <name>Zn(2+)</name>
        <dbReference type="ChEBI" id="CHEBI:29105"/>
        <label>2</label>
    </ligand>
</feature>
<feature type="binding site" evidence="4">
    <location>
        <position position="96"/>
    </location>
    <ligand>
        <name>Zn(2+)</name>
        <dbReference type="ChEBI" id="CHEBI:29105"/>
        <label>1</label>
    </ligand>
</feature>
<feature type="binding site" evidence="4">
    <location>
        <position position="99"/>
    </location>
    <ligand>
        <name>Zn(2+)</name>
        <dbReference type="ChEBI" id="CHEBI:29105"/>
        <label>1</label>
    </ligand>
</feature>
<feature type="binding site" evidence="4">
    <location>
        <position position="112"/>
    </location>
    <ligand>
        <name>Zn(2+)</name>
        <dbReference type="ChEBI" id="CHEBI:29105"/>
        <label>2</label>
    </ligand>
</feature>
<feature type="binding site" evidence="4">
    <location>
        <position position="115"/>
    </location>
    <ligand>
        <name>Zn(2+)</name>
        <dbReference type="ChEBI" id="CHEBI:29105"/>
        <label>2</label>
    </ligand>
</feature>
<sequence length="252" mass="28462">MTTSRCSHLPEVLPDCTSSAPSGKTVEDCSSLVNGQPQYVMQVSAKDGQLLSTVVRTLTTQSSFNDHPMCRICHEGSTQEDLLSPCECTGTLGTIHRSCLEHWLSSSNTSYCELCHFRFSVERKPRPLVEWLRNPGPQHEKRTLFGDMVCFLFITPLATISGWLCLRGAVDHLHFSSRLEAVGLIALTVALFTIYLFWTLVSFRYHCRLYNEWRRTNQRVILVIPKSANLPSAQQSLLGLHSFKRNSKETIV</sequence>
<keyword id="KW-0968">Cytoplasmic vesicle</keyword>
<keyword id="KW-0254">Endocytosis</keyword>
<keyword id="KW-0967">Endosome</keyword>
<keyword id="KW-0472">Membrane</keyword>
<keyword id="KW-0479">Metal-binding</keyword>
<keyword id="KW-1185">Reference proteome</keyword>
<keyword id="KW-0808">Transferase</keyword>
<keyword id="KW-0812">Transmembrane</keyword>
<keyword id="KW-1133">Transmembrane helix</keyword>
<keyword id="KW-0833">Ubl conjugation pathway</keyword>
<keyword id="KW-0862">Zinc</keyword>
<keyword id="KW-0863">Zinc-finger</keyword>
<dbReference type="EC" id="2.3.2.27"/>
<dbReference type="EMBL" id="BC123374">
    <property type="protein sequence ID" value="AAI23375.1"/>
    <property type="molecule type" value="mRNA"/>
</dbReference>
<dbReference type="RefSeq" id="NP_001090417.1">
    <property type="nucleotide sequence ID" value="NM_001096948.1"/>
</dbReference>
<dbReference type="RefSeq" id="XP_018095526.1">
    <property type="nucleotide sequence ID" value="XM_018240037.1"/>
</dbReference>
<dbReference type="SMR" id="Q0IH10"/>
<dbReference type="DNASU" id="779329"/>
<dbReference type="GeneID" id="779329"/>
<dbReference type="KEGG" id="xla:779329"/>
<dbReference type="AGR" id="Xenbase:XB-GENE-866113"/>
<dbReference type="CTD" id="779329"/>
<dbReference type="Xenbase" id="XB-GENE-866113">
    <property type="gene designation" value="marchf3.S"/>
</dbReference>
<dbReference type="OMA" id="FNDQPIC"/>
<dbReference type="OrthoDB" id="273089at2759"/>
<dbReference type="UniPathway" id="UPA00143"/>
<dbReference type="Proteomes" id="UP000186698">
    <property type="component" value="Chromosome 1S"/>
</dbReference>
<dbReference type="Bgee" id="779329">
    <property type="expression patterns" value="Expressed in muscle tissue and 18 other cell types or tissues"/>
</dbReference>
<dbReference type="GO" id="GO:0031901">
    <property type="term" value="C:early endosome membrane"/>
    <property type="evidence" value="ECO:0007669"/>
    <property type="project" value="UniProtKB-SubCell"/>
</dbReference>
<dbReference type="GO" id="GO:0005768">
    <property type="term" value="C:endosome"/>
    <property type="evidence" value="ECO:0000250"/>
    <property type="project" value="UniProtKB"/>
</dbReference>
<dbReference type="GO" id="GO:0005764">
    <property type="term" value="C:lysosome"/>
    <property type="evidence" value="ECO:0000250"/>
    <property type="project" value="UniProtKB"/>
</dbReference>
<dbReference type="GO" id="GO:0004842">
    <property type="term" value="F:ubiquitin-protein transferase activity"/>
    <property type="evidence" value="ECO:0000318"/>
    <property type="project" value="GO_Central"/>
</dbReference>
<dbReference type="GO" id="GO:0008270">
    <property type="term" value="F:zinc ion binding"/>
    <property type="evidence" value="ECO:0007669"/>
    <property type="project" value="UniProtKB-KW"/>
</dbReference>
<dbReference type="GO" id="GO:0006897">
    <property type="term" value="P:endocytosis"/>
    <property type="evidence" value="ECO:0007669"/>
    <property type="project" value="UniProtKB-KW"/>
</dbReference>
<dbReference type="GO" id="GO:0016567">
    <property type="term" value="P:protein ubiquitination"/>
    <property type="evidence" value="ECO:0000318"/>
    <property type="project" value="GO_Central"/>
</dbReference>
<dbReference type="FunFam" id="3.30.40.10:FF:000119">
    <property type="entry name" value="E3 ubiquitin-protein ligase MARCH2"/>
    <property type="match status" value="1"/>
</dbReference>
<dbReference type="Gene3D" id="3.30.40.10">
    <property type="entry name" value="Zinc/RING finger domain, C3HC4 (zinc finger)"/>
    <property type="match status" value="1"/>
</dbReference>
<dbReference type="InterPro" id="IPR001841">
    <property type="entry name" value="Znf_RING"/>
</dbReference>
<dbReference type="InterPro" id="IPR011016">
    <property type="entry name" value="Znf_RING-CH"/>
</dbReference>
<dbReference type="InterPro" id="IPR013083">
    <property type="entry name" value="Znf_RING/FYVE/PHD"/>
</dbReference>
<dbReference type="PANTHER" id="PTHR46065">
    <property type="entry name" value="E3 UBIQUITIN-PROTEIN LIGASE MARCH 2/3 FAMILY MEMBER"/>
    <property type="match status" value="1"/>
</dbReference>
<dbReference type="PANTHER" id="PTHR46065:SF2">
    <property type="entry name" value="E3 UBIQUITIN-PROTEIN LIGASE MARCHF3"/>
    <property type="match status" value="1"/>
</dbReference>
<dbReference type="Pfam" id="PF12906">
    <property type="entry name" value="RINGv"/>
    <property type="match status" value="1"/>
</dbReference>
<dbReference type="SMART" id="SM00744">
    <property type="entry name" value="RINGv"/>
    <property type="match status" value="1"/>
</dbReference>
<dbReference type="SUPFAM" id="SSF57850">
    <property type="entry name" value="RING/U-box"/>
    <property type="match status" value="1"/>
</dbReference>
<dbReference type="PROSITE" id="PS51292">
    <property type="entry name" value="ZF_RING_CH"/>
    <property type="match status" value="1"/>
</dbReference>
<accession>Q0IH10</accession>
<name>MARH3_XENLA</name>
<protein>
    <recommendedName>
        <fullName>E3 ubiquitin-protein ligase MARCHF3</fullName>
        <ecNumber>2.3.2.27</ecNumber>
    </recommendedName>
    <alternativeName>
        <fullName>Membrane-associated RING finger protein 3</fullName>
    </alternativeName>
    <alternativeName>
        <fullName>Membrane-associated RING-CH protein III</fullName>
        <shortName>MARCH-III</shortName>
    </alternativeName>
    <alternativeName>
        <fullName evidence="5">RING-type E3 ubiquitin transferase MARCHF3</fullName>
    </alternativeName>
</protein>
<organism>
    <name type="scientific">Xenopus laevis</name>
    <name type="common">African clawed frog</name>
    <dbReference type="NCBI Taxonomy" id="8355"/>
    <lineage>
        <taxon>Eukaryota</taxon>
        <taxon>Metazoa</taxon>
        <taxon>Chordata</taxon>
        <taxon>Craniata</taxon>
        <taxon>Vertebrata</taxon>
        <taxon>Euteleostomi</taxon>
        <taxon>Amphibia</taxon>
        <taxon>Batrachia</taxon>
        <taxon>Anura</taxon>
        <taxon>Pipoidea</taxon>
        <taxon>Pipidae</taxon>
        <taxon>Xenopodinae</taxon>
        <taxon>Xenopus</taxon>
        <taxon>Xenopus</taxon>
    </lineage>
</organism>
<reference key="1">
    <citation type="submission" date="2006-09" db="EMBL/GenBank/DDBJ databases">
        <authorList>
            <consortium name="NIH - Xenopus Gene Collection (XGC) project"/>
        </authorList>
    </citation>
    <scope>NUCLEOTIDE SEQUENCE [LARGE SCALE MRNA]</scope>
    <source>
        <tissue>Ovary</tissue>
    </source>
</reference>
<proteinExistence type="evidence at transcript level"/>